<proteinExistence type="inferred from homology"/>
<comment type="similarity">
    <text evidence="1">Belongs to the UPF0354 family.</text>
</comment>
<organism>
    <name type="scientific">Staphylococcus aureus (strain COL)</name>
    <dbReference type="NCBI Taxonomy" id="93062"/>
    <lineage>
        <taxon>Bacteria</taxon>
        <taxon>Bacillati</taxon>
        <taxon>Bacillota</taxon>
        <taxon>Bacilli</taxon>
        <taxon>Bacillales</taxon>
        <taxon>Staphylococcaceae</taxon>
        <taxon>Staphylococcus</taxon>
    </lineage>
</organism>
<reference key="1">
    <citation type="journal article" date="2005" name="J. Bacteriol.">
        <title>Insights on evolution of virulence and resistance from the complete genome analysis of an early methicillin-resistant Staphylococcus aureus strain and a biofilm-producing methicillin-resistant Staphylococcus epidermidis strain.</title>
        <authorList>
            <person name="Gill S.R."/>
            <person name="Fouts D.E."/>
            <person name="Archer G.L."/>
            <person name="Mongodin E.F."/>
            <person name="DeBoy R.T."/>
            <person name="Ravel J."/>
            <person name="Paulsen I.T."/>
            <person name="Kolonay J.F."/>
            <person name="Brinkac L.M."/>
            <person name="Beanan M.J."/>
            <person name="Dodson R.J."/>
            <person name="Daugherty S.C."/>
            <person name="Madupu R."/>
            <person name="Angiuoli S.V."/>
            <person name="Durkin A.S."/>
            <person name="Haft D.H."/>
            <person name="Vamathevan J.J."/>
            <person name="Khouri H."/>
            <person name="Utterback T.R."/>
            <person name="Lee C."/>
            <person name="Dimitrov G."/>
            <person name="Jiang L."/>
            <person name="Qin H."/>
            <person name="Weidman J."/>
            <person name="Tran K."/>
            <person name="Kang K.H."/>
            <person name="Hance I.R."/>
            <person name="Nelson K.E."/>
            <person name="Fraser C.M."/>
        </authorList>
    </citation>
    <scope>NUCLEOTIDE SEQUENCE [LARGE SCALE GENOMIC DNA]</scope>
    <source>
        <strain>COL</strain>
    </source>
</reference>
<name>Y1793_STAAC</name>
<evidence type="ECO:0000255" key="1">
    <source>
        <dbReference type="HAMAP-Rule" id="MF_01548"/>
    </source>
</evidence>
<gene>
    <name type="ordered locus">SACOL1793</name>
</gene>
<dbReference type="EMBL" id="CP000046">
    <property type="protein sequence ID" value="AAW38321.1"/>
    <property type="molecule type" value="Genomic_DNA"/>
</dbReference>
<dbReference type="RefSeq" id="WP_001091386.1">
    <property type="nucleotide sequence ID" value="NC_002951.2"/>
</dbReference>
<dbReference type="KEGG" id="sac:SACOL1793"/>
<dbReference type="HOGENOM" id="CLU_085634_0_0_9"/>
<dbReference type="Proteomes" id="UP000000530">
    <property type="component" value="Chromosome"/>
</dbReference>
<dbReference type="HAMAP" id="MF_01548">
    <property type="entry name" value="UPF0354"/>
    <property type="match status" value="1"/>
</dbReference>
<dbReference type="InterPro" id="IPR010838">
    <property type="entry name" value="DUF1444"/>
</dbReference>
<dbReference type="NCBIfam" id="NF010189">
    <property type="entry name" value="PRK13668.1"/>
    <property type="match status" value="1"/>
</dbReference>
<dbReference type="Pfam" id="PF07285">
    <property type="entry name" value="DUF1444"/>
    <property type="match status" value="1"/>
</dbReference>
<dbReference type="PIRSF" id="PIRSF012562">
    <property type="entry name" value="UCP012562"/>
    <property type="match status" value="1"/>
</dbReference>
<accession>Q5HF31</accession>
<sequence>MNTFQMRDKLKERLSHLDVDFKFNREEETLRIYRTDNNKGITIKLNAIVAKYEDKKEKIVDEIVYYVDEAIAQMADKTLESISSSQIMPVIRATSFDKKTKQGVPFIYDEHTAETAVYYAVDLGKSYRLIDESMLEDLKLTEQQIREMSLFNVRKLSNSYTTDEVKGNIFYFINSNDGYDASRILNTAFLNEIEAQCQGEMLVAVPHQDVLIIADIRNKTGYDVMAHLTMEFFTKGLVPITSLSFGYKQGHLEPIFILGKNNKQKRDPNVIQRLEANRRKFDKDK</sequence>
<protein>
    <recommendedName>
        <fullName evidence="1">UPF0354 protein SACOL1793</fullName>
    </recommendedName>
</protein>
<feature type="chain" id="PRO_0000171107" description="UPF0354 protein SACOL1793">
    <location>
        <begin position="1"/>
        <end position="285"/>
    </location>
</feature>